<sequence length="379" mass="43010">MTNIRKTHPLIKIINHSFIDLPAPSNISAWWNFGSLLGICLIIQILTGLFLAMHYTSDTMTAFSSVTHICRDVNYGWLIRYMHANGASMFFICLFLHVGRGLYYGSYTYFETWNIGVILLFAVMATAFMGYVLPWGQMSFWGATVITNLLSAIPYIGTTLVEWIWGGFSVDKATLTRFFAFHFILPFIITALVMVHLLFLHETGSNNPSGLISDSDKIPFHPYYTIKDILGILLLILALMILVLFSPDLLGDPDNYTPANPLSTPPHIKPEWYFLFAYAILRSIPNKLGGVLALVLSILILMLFPILHMSKQRSMMFRPLSQCMFWILVADLFTLTWIGGQPVEYPFIIIGQLASILYFTIILLILPAISLFENKLLKW</sequence>
<organism>
    <name type="scientific">Tamias minimus</name>
    <name type="common">Least chipmunk</name>
    <name type="synonym">Neotamias minimus</name>
    <dbReference type="NCBI Taxonomy" id="45468"/>
    <lineage>
        <taxon>Eukaryota</taxon>
        <taxon>Metazoa</taxon>
        <taxon>Chordata</taxon>
        <taxon>Craniata</taxon>
        <taxon>Vertebrata</taxon>
        <taxon>Euteleostomi</taxon>
        <taxon>Mammalia</taxon>
        <taxon>Eutheria</taxon>
        <taxon>Euarchontoglires</taxon>
        <taxon>Glires</taxon>
        <taxon>Rodentia</taxon>
        <taxon>Sciuromorpha</taxon>
        <taxon>Sciuridae</taxon>
        <taxon>Xerinae</taxon>
        <taxon>Marmotini</taxon>
        <taxon>Tamias</taxon>
    </lineage>
</organism>
<reference key="1">
    <citation type="journal article" date="2001" name="Mol. Phylogenet. Evol.">
        <title>Molecular phylogeny of the chipmunks inferred from mitochondrial cytochrome b and cytochrome oxidase II gene sequences.</title>
        <authorList>
            <person name="Piaggio A.J."/>
            <person name="Spicer G.S."/>
        </authorList>
    </citation>
    <scope>NUCLEOTIDE SEQUENCE [GENOMIC DNA]</scope>
</reference>
<protein>
    <recommendedName>
        <fullName>Cytochrome b</fullName>
    </recommendedName>
    <alternativeName>
        <fullName>Complex III subunit 3</fullName>
    </alternativeName>
    <alternativeName>
        <fullName>Complex III subunit III</fullName>
    </alternativeName>
    <alternativeName>
        <fullName>Cytochrome b-c1 complex subunit 3</fullName>
    </alternativeName>
    <alternativeName>
        <fullName>Ubiquinol-cytochrome-c reductase complex cytochrome b subunit</fullName>
    </alternativeName>
</protein>
<gene>
    <name type="primary">MT-CYB</name>
    <name type="synonym">COB</name>
    <name type="synonym">CYTB</name>
    <name type="synonym">MTCYB</name>
</gene>
<proteinExistence type="inferred from homology"/>
<evidence type="ECO:0000250" key="1"/>
<evidence type="ECO:0000250" key="2">
    <source>
        <dbReference type="UniProtKB" id="P00157"/>
    </source>
</evidence>
<evidence type="ECO:0000255" key="3">
    <source>
        <dbReference type="PROSITE-ProRule" id="PRU00967"/>
    </source>
</evidence>
<evidence type="ECO:0000255" key="4">
    <source>
        <dbReference type="PROSITE-ProRule" id="PRU00968"/>
    </source>
</evidence>
<name>CYB_TAMMI</name>
<accession>Q94Y62</accession>
<dbReference type="EMBL" id="AF147646">
    <property type="protein sequence ID" value="AAL14045.1"/>
    <property type="molecule type" value="Genomic_DNA"/>
</dbReference>
<dbReference type="SMR" id="Q94Y62"/>
<dbReference type="GO" id="GO:0005743">
    <property type="term" value="C:mitochondrial inner membrane"/>
    <property type="evidence" value="ECO:0007669"/>
    <property type="project" value="UniProtKB-SubCell"/>
</dbReference>
<dbReference type="GO" id="GO:0045275">
    <property type="term" value="C:respiratory chain complex III"/>
    <property type="evidence" value="ECO:0007669"/>
    <property type="project" value="InterPro"/>
</dbReference>
<dbReference type="GO" id="GO:0046872">
    <property type="term" value="F:metal ion binding"/>
    <property type="evidence" value="ECO:0007669"/>
    <property type="project" value="UniProtKB-KW"/>
</dbReference>
<dbReference type="GO" id="GO:0008121">
    <property type="term" value="F:ubiquinol-cytochrome-c reductase activity"/>
    <property type="evidence" value="ECO:0007669"/>
    <property type="project" value="InterPro"/>
</dbReference>
<dbReference type="GO" id="GO:0006122">
    <property type="term" value="P:mitochondrial electron transport, ubiquinol to cytochrome c"/>
    <property type="evidence" value="ECO:0007669"/>
    <property type="project" value="TreeGrafter"/>
</dbReference>
<dbReference type="CDD" id="cd00290">
    <property type="entry name" value="cytochrome_b_C"/>
    <property type="match status" value="1"/>
</dbReference>
<dbReference type="CDD" id="cd00284">
    <property type="entry name" value="Cytochrome_b_N"/>
    <property type="match status" value="1"/>
</dbReference>
<dbReference type="FunFam" id="1.20.810.10:FF:000002">
    <property type="entry name" value="Cytochrome b"/>
    <property type="match status" value="1"/>
</dbReference>
<dbReference type="Gene3D" id="1.20.810.10">
    <property type="entry name" value="Cytochrome Bc1 Complex, Chain C"/>
    <property type="match status" value="1"/>
</dbReference>
<dbReference type="InterPro" id="IPR005798">
    <property type="entry name" value="Cyt_b/b6_C"/>
</dbReference>
<dbReference type="InterPro" id="IPR036150">
    <property type="entry name" value="Cyt_b/b6_C_sf"/>
</dbReference>
<dbReference type="InterPro" id="IPR005797">
    <property type="entry name" value="Cyt_b/b6_N"/>
</dbReference>
<dbReference type="InterPro" id="IPR027387">
    <property type="entry name" value="Cytb/b6-like_sf"/>
</dbReference>
<dbReference type="InterPro" id="IPR030689">
    <property type="entry name" value="Cytochrome_b"/>
</dbReference>
<dbReference type="InterPro" id="IPR048260">
    <property type="entry name" value="Cytochrome_b_C_euk/bac"/>
</dbReference>
<dbReference type="InterPro" id="IPR048259">
    <property type="entry name" value="Cytochrome_b_N_euk/bac"/>
</dbReference>
<dbReference type="InterPro" id="IPR016174">
    <property type="entry name" value="Di-haem_cyt_TM"/>
</dbReference>
<dbReference type="PANTHER" id="PTHR19271">
    <property type="entry name" value="CYTOCHROME B"/>
    <property type="match status" value="1"/>
</dbReference>
<dbReference type="PANTHER" id="PTHR19271:SF16">
    <property type="entry name" value="CYTOCHROME B"/>
    <property type="match status" value="1"/>
</dbReference>
<dbReference type="Pfam" id="PF00032">
    <property type="entry name" value="Cytochrom_B_C"/>
    <property type="match status" value="1"/>
</dbReference>
<dbReference type="Pfam" id="PF00033">
    <property type="entry name" value="Cytochrome_B"/>
    <property type="match status" value="1"/>
</dbReference>
<dbReference type="PIRSF" id="PIRSF038885">
    <property type="entry name" value="COB"/>
    <property type="match status" value="1"/>
</dbReference>
<dbReference type="SUPFAM" id="SSF81648">
    <property type="entry name" value="a domain/subunit of cytochrome bc1 complex (Ubiquinol-cytochrome c reductase)"/>
    <property type="match status" value="1"/>
</dbReference>
<dbReference type="SUPFAM" id="SSF81342">
    <property type="entry name" value="Transmembrane di-heme cytochromes"/>
    <property type="match status" value="1"/>
</dbReference>
<dbReference type="PROSITE" id="PS51003">
    <property type="entry name" value="CYTB_CTER"/>
    <property type="match status" value="1"/>
</dbReference>
<dbReference type="PROSITE" id="PS51002">
    <property type="entry name" value="CYTB_NTER"/>
    <property type="match status" value="1"/>
</dbReference>
<comment type="function">
    <text evidence="2">Component of the ubiquinol-cytochrome c reductase complex (complex III or cytochrome b-c1 complex) that is part of the mitochondrial respiratory chain. The b-c1 complex mediates electron transfer from ubiquinol to cytochrome c. Contributes to the generation of a proton gradient across the mitochondrial membrane that is then used for ATP synthesis.</text>
</comment>
<comment type="cofactor">
    <cofactor evidence="2">
        <name>heme b</name>
        <dbReference type="ChEBI" id="CHEBI:60344"/>
    </cofactor>
    <text evidence="2">Binds 2 heme b groups non-covalently.</text>
</comment>
<comment type="subunit">
    <text evidence="2">The cytochrome bc1 complex contains 11 subunits: 3 respiratory subunits (MT-CYB, CYC1 and UQCRFS1), 2 core proteins (UQCRC1 and UQCRC2) and 6 low-molecular weight proteins (UQCRH/QCR6, UQCRB/QCR7, UQCRQ/QCR8, UQCR10/QCR9, UQCR11/QCR10 and a cleavage product of UQCRFS1). This cytochrome bc1 complex then forms a dimer.</text>
</comment>
<comment type="subcellular location">
    <subcellularLocation>
        <location evidence="2">Mitochondrion inner membrane</location>
        <topology evidence="2">Multi-pass membrane protein</topology>
    </subcellularLocation>
</comment>
<comment type="miscellaneous">
    <text evidence="1">Heme 1 (or BL or b562) is low-potential and absorbs at about 562 nm, and heme 2 (or BH or b566) is high-potential and absorbs at about 566 nm.</text>
</comment>
<comment type="similarity">
    <text evidence="3 4">Belongs to the cytochrome b family.</text>
</comment>
<comment type="caution">
    <text evidence="2">The full-length protein contains only eight transmembrane helices, not nine as predicted by bioinformatics tools.</text>
</comment>
<keyword id="KW-0249">Electron transport</keyword>
<keyword id="KW-0349">Heme</keyword>
<keyword id="KW-0408">Iron</keyword>
<keyword id="KW-0472">Membrane</keyword>
<keyword id="KW-0479">Metal-binding</keyword>
<keyword id="KW-0496">Mitochondrion</keyword>
<keyword id="KW-0999">Mitochondrion inner membrane</keyword>
<keyword id="KW-0679">Respiratory chain</keyword>
<keyword id="KW-0812">Transmembrane</keyword>
<keyword id="KW-1133">Transmembrane helix</keyword>
<keyword id="KW-0813">Transport</keyword>
<keyword id="KW-0830">Ubiquinone</keyword>
<feature type="chain" id="PRO_0000061638" description="Cytochrome b">
    <location>
        <begin position="1"/>
        <end position="379"/>
    </location>
</feature>
<feature type="transmembrane region" description="Helical" evidence="2">
    <location>
        <begin position="33"/>
        <end position="53"/>
    </location>
</feature>
<feature type="transmembrane region" description="Helical" evidence="2">
    <location>
        <begin position="77"/>
        <end position="98"/>
    </location>
</feature>
<feature type="transmembrane region" description="Helical" evidence="2">
    <location>
        <begin position="113"/>
        <end position="133"/>
    </location>
</feature>
<feature type="transmembrane region" description="Helical" evidence="2">
    <location>
        <begin position="178"/>
        <end position="198"/>
    </location>
</feature>
<feature type="transmembrane region" description="Helical" evidence="2">
    <location>
        <begin position="226"/>
        <end position="246"/>
    </location>
</feature>
<feature type="transmembrane region" description="Helical" evidence="2">
    <location>
        <begin position="288"/>
        <end position="308"/>
    </location>
</feature>
<feature type="transmembrane region" description="Helical" evidence="2">
    <location>
        <begin position="320"/>
        <end position="340"/>
    </location>
</feature>
<feature type="transmembrane region" description="Helical" evidence="2">
    <location>
        <begin position="347"/>
        <end position="367"/>
    </location>
</feature>
<feature type="binding site" description="axial binding residue" evidence="2">
    <location>
        <position position="83"/>
    </location>
    <ligand>
        <name>heme b</name>
        <dbReference type="ChEBI" id="CHEBI:60344"/>
        <label>b562</label>
    </ligand>
    <ligandPart>
        <name>Fe</name>
        <dbReference type="ChEBI" id="CHEBI:18248"/>
    </ligandPart>
</feature>
<feature type="binding site" description="axial binding residue" evidence="2">
    <location>
        <position position="97"/>
    </location>
    <ligand>
        <name>heme b</name>
        <dbReference type="ChEBI" id="CHEBI:60344"/>
        <label>b566</label>
    </ligand>
    <ligandPart>
        <name>Fe</name>
        <dbReference type="ChEBI" id="CHEBI:18248"/>
    </ligandPart>
</feature>
<feature type="binding site" description="axial binding residue" evidence="2">
    <location>
        <position position="182"/>
    </location>
    <ligand>
        <name>heme b</name>
        <dbReference type="ChEBI" id="CHEBI:60344"/>
        <label>b562</label>
    </ligand>
    <ligandPart>
        <name>Fe</name>
        <dbReference type="ChEBI" id="CHEBI:18248"/>
    </ligandPart>
</feature>
<feature type="binding site" description="axial binding residue" evidence="2">
    <location>
        <position position="196"/>
    </location>
    <ligand>
        <name>heme b</name>
        <dbReference type="ChEBI" id="CHEBI:60344"/>
        <label>b566</label>
    </ligand>
    <ligandPart>
        <name>Fe</name>
        <dbReference type="ChEBI" id="CHEBI:18248"/>
    </ligandPart>
</feature>
<feature type="binding site" evidence="2">
    <location>
        <position position="201"/>
    </location>
    <ligand>
        <name>a ubiquinone</name>
        <dbReference type="ChEBI" id="CHEBI:16389"/>
    </ligand>
</feature>
<geneLocation type="mitochondrion"/>